<gene>
    <name type="ordered locus">SACOL0957</name>
</gene>
<reference key="1">
    <citation type="journal article" date="2005" name="J. Bacteriol.">
        <title>Insights on evolution of virulence and resistance from the complete genome analysis of an early methicillin-resistant Staphylococcus aureus strain and a biofilm-producing methicillin-resistant Staphylococcus epidermidis strain.</title>
        <authorList>
            <person name="Gill S.R."/>
            <person name="Fouts D.E."/>
            <person name="Archer G.L."/>
            <person name="Mongodin E.F."/>
            <person name="DeBoy R.T."/>
            <person name="Ravel J."/>
            <person name="Paulsen I.T."/>
            <person name="Kolonay J.F."/>
            <person name="Brinkac L.M."/>
            <person name="Beanan M.J."/>
            <person name="Dodson R.J."/>
            <person name="Daugherty S.C."/>
            <person name="Madupu R."/>
            <person name="Angiuoli S.V."/>
            <person name="Durkin A.S."/>
            <person name="Haft D.H."/>
            <person name="Vamathevan J.J."/>
            <person name="Khouri H."/>
            <person name="Utterback T.R."/>
            <person name="Lee C."/>
            <person name="Dimitrov G."/>
            <person name="Jiang L."/>
            <person name="Qin H."/>
            <person name="Weidman J."/>
            <person name="Tran K."/>
            <person name="Kang K.H."/>
            <person name="Hance I.R."/>
            <person name="Nelson K.E."/>
            <person name="Fraser C.M."/>
        </authorList>
    </citation>
    <scope>NUCLEOTIDE SEQUENCE [LARGE SCALE GENOMIC DNA]</scope>
    <source>
        <strain>COL</strain>
    </source>
</reference>
<keyword id="KW-0413">Isomerase</keyword>
<keyword id="KW-0697">Rotamase</keyword>
<sequence>MANYPQLNKEVQQGEIKVVMHTNKGDMTFKLFPNIAPKTVENFVTHAKNGYYDGITFHRVINDFMIQGGDPTATGMGGESIYGGAFEDEFSLNAFNLYGALSMANSGPNTNGSQFFIVQMKEVPQNMLSQLTDGGWPQPIVDAYGEKGGTPWLDQKHTVFGQIIDGETTLEDIANTKVGPQDKPLHDVVIESIDVEE</sequence>
<accession>Q5HHD1</accession>
<dbReference type="EC" id="5.2.1.8"/>
<dbReference type="EMBL" id="CP000046">
    <property type="protein sequence ID" value="AAW37925.1"/>
    <property type="molecule type" value="Genomic_DNA"/>
</dbReference>
<dbReference type="RefSeq" id="WP_000035060.1">
    <property type="nucleotide sequence ID" value="NC_002951.2"/>
</dbReference>
<dbReference type="SMR" id="Q5HHD1"/>
<dbReference type="KEGG" id="sac:SACOL0957"/>
<dbReference type="HOGENOM" id="CLU_012062_16_0_9"/>
<dbReference type="Proteomes" id="UP000000530">
    <property type="component" value="Chromosome"/>
</dbReference>
<dbReference type="GO" id="GO:0003755">
    <property type="term" value="F:peptidyl-prolyl cis-trans isomerase activity"/>
    <property type="evidence" value="ECO:0007669"/>
    <property type="project" value="UniProtKB-KW"/>
</dbReference>
<dbReference type="Gene3D" id="2.40.100.10">
    <property type="entry name" value="Cyclophilin-like"/>
    <property type="match status" value="1"/>
</dbReference>
<dbReference type="InterPro" id="IPR029000">
    <property type="entry name" value="Cyclophilin-like_dom_sf"/>
</dbReference>
<dbReference type="InterPro" id="IPR024936">
    <property type="entry name" value="Cyclophilin-type_PPIase"/>
</dbReference>
<dbReference type="InterPro" id="IPR002130">
    <property type="entry name" value="Cyclophilin-type_PPIase_dom"/>
</dbReference>
<dbReference type="InterPro" id="IPR044666">
    <property type="entry name" value="Cyclophilin_A-like"/>
</dbReference>
<dbReference type="PANTHER" id="PTHR45625">
    <property type="entry name" value="PEPTIDYL-PROLYL CIS-TRANS ISOMERASE-RELATED"/>
    <property type="match status" value="1"/>
</dbReference>
<dbReference type="PANTHER" id="PTHR45625:SF4">
    <property type="entry name" value="PEPTIDYLPROLYL ISOMERASE DOMAIN AND WD REPEAT-CONTAINING PROTEIN 1"/>
    <property type="match status" value="1"/>
</dbReference>
<dbReference type="Pfam" id="PF00160">
    <property type="entry name" value="Pro_isomerase"/>
    <property type="match status" value="1"/>
</dbReference>
<dbReference type="PIRSF" id="PIRSF001467">
    <property type="entry name" value="Peptidylpro_ismrse"/>
    <property type="match status" value="1"/>
</dbReference>
<dbReference type="PRINTS" id="PR00153">
    <property type="entry name" value="CSAPPISMRASE"/>
</dbReference>
<dbReference type="SUPFAM" id="SSF50891">
    <property type="entry name" value="Cyclophilin-like"/>
    <property type="match status" value="1"/>
</dbReference>
<dbReference type="PROSITE" id="PS50072">
    <property type="entry name" value="CSA_PPIASE_2"/>
    <property type="match status" value="1"/>
</dbReference>
<name>PPI1_STAAC</name>
<evidence type="ECO:0000250" key="1"/>
<evidence type="ECO:0000255" key="2">
    <source>
        <dbReference type="PROSITE-ProRule" id="PRU00156"/>
    </source>
</evidence>
<evidence type="ECO:0000305" key="3"/>
<feature type="chain" id="PRO_0000299082" description="Putative peptidyl-prolyl cis-trans isomerase">
    <location>
        <begin position="1"/>
        <end position="197"/>
    </location>
</feature>
<feature type="domain" description="PPIase cyclophilin-type" evidence="2">
    <location>
        <begin position="14"/>
        <end position="195"/>
    </location>
</feature>
<organism>
    <name type="scientific">Staphylococcus aureus (strain COL)</name>
    <dbReference type="NCBI Taxonomy" id="93062"/>
    <lineage>
        <taxon>Bacteria</taxon>
        <taxon>Bacillati</taxon>
        <taxon>Bacillota</taxon>
        <taxon>Bacilli</taxon>
        <taxon>Bacillales</taxon>
        <taxon>Staphylococcaceae</taxon>
        <taxon>Staphylococcus</taxon>
    </lineage>
</organism>
<comment type="function">
    <text evidence="1">PPIases accelerate the folding of proteins. It catalyzes the cis-trans isomerization of proline imidic peptide bonds in oligopeptides (By similarity).</text>
</comment>
<comment type="catalytic activity">
    <reaction>
        <text>[protein]-peptidylproline (omega=180) = [protein]-peptidylproline (omega=0)</text>
        <dbReference type="Rhea" id="RHEA:16237"/>
        <dbReference type="Rhea" id="RHEA-COMP:10747"/>
        <dbReference type="Rhea" id="RHEA-COMP:10748"/>
        <dbReference type="ChEBI" id="CHEBI:83833"/>
        <dbReference type="ChEBI" id="CHEBI:83834"/>
        <dbReference type="EC" id="5.2.1.8"/>
    </reaction>
</comment>
<comment type="similarity">
    <text evidence="3">Belongs to the cyclophilin-type PPIase family.</text>
</comment>
<protein>
    <recommendedName>
        <fullName>Putative peptidyl-prolyl cis-trans isomerase</fullName>
        <shortName>PPIase</shortName>
        <ecNumber>5.2.1.8</ecNumber>
    </recommendedName>
    <alternativeName>
        <fullName>Rotamase</fullName>
    </alternativeName>
</protein>
<proteinExistence type="inferred from homology"/>